<proteinExistence type="inferred from homology"/>
<accession>B2FNZ1</accession>
<feature type="chain" id="PRO_1000095827" description="Tryptophan synthase beta chain">
    <location>
        <begin position="1"/>
        <end position="405"/>
    </location>
</feature>
<feature type="modified residue" description="N6-(pyridoxal phosphate)lysine" evidence="1">
    <location>
        <position position="98"/>
    </location>
</feature>
<dbReference type="EC" id="4.2.1.20" evidence="1"/>
<dbReference type="EMBL" id="AM743169">
    <property type="protein sequence ID" value="CAQ46845.1"/>
    <property type="molecule type" value="Genomic_DNA"/>
</dbReference>
<dbReference type="RefSeq" id="WP_005410476.1">
    <property type="nucleotide sequence ID" value="NC_010943.1"/>
</dbReference>
<dbReference type="SMR" id="B2FNZ1"/>
<dbReference type="EnsemblBacteria" id="CAQ46845">
    <property type="protein sequence ID" value="CAQ46845"/>
    <property type="gene ID" value="Smlt3419"/>
</dbReference>
<dbReference type="KEGG" id="sml:Smlt3419"/>
<dbReference type="eggNOG" id="COG0133">
    <property type="taxonomic scope" value="Bacteria"/>
</dbReference>
<dbReference type="HOGENOM" id="CLU_016734_3_1_6"/>
<dbReference type="UniPathway" id="UPA00035">
    <property type="reaction ID" value="UER00044"/>
</dbReference>
<dbReference type="Proteomes" id="UP000008840">
    <property type="component" value="Chromosome"/>
</dbReference>
<dbReference type="GO" id="GO:0005737">
    <property type="term" value="C:cytoplasm"/>
    <property type="evidence" value="ECO:0007669"/>
    <property type="project" value="TreeGrafter"/>
</dbReference>
<dbReference type="GO" id="GO:0004834">
    <property type="term" value="F:tryptophan synthase activity"/>
    <property type="evidence" value="ECO:0007669"/>
    <property type="project" value="UniProtKB-UniRule"/>
</dbReference>
<dbReference type="CDD" id="cd06446">
    <property type="entry name" value="Trp-synth_B"/>
    <property type="match status" value="1"/>
</dbReference>
<dbReference type="FunFam" id="3.40.50.1100:FF:000001">
    <property type="entry name" value="Tryptophan synthase beta chain"/>
    <property type="match status" value="1"/>
</dbReference>
<dbReference type="FunFam" id="3.40.50.1100:FF:000004">
    <property type="entry name" value="Tryptophan synthase beta chain"/>
    <property type="match status" value="1"/>
</dbReference>
<dbReference type="Gene3D" id="3.40.50.1100">
    <property type="match status" value="2"/>
</dbReference>
<dbReference type="HAMAP" id="MF_00133">
    <property type="entry name" value="Trp_synth_beta"/>
    <property type="match status" value="1"/>
</dbReference>
<dbReference type="InterPro" id="IPR006653">
    <property type="entry name" value="Trp_synth_b_CS"/>
</dbReference>
<dbReference type="InterPro" id="IPR006654">
    <property type="entry name" value="Trp_synth_beta"/>
</dbReference>
<dbReference type="InterPro" id="IPR023026">
    <property type="entry name" value="Trp_synth_beta/beta-like"/>
</dbReference>
<dbReference type="InterPro" id="IPR001926">
    <property type="entry name" value="TrpB-like_PALP"/>
</dbReference>
<dbReference type="InterPro" id="IPR036052">
    <property type="entry name" value="TrpB-like_PALP_sf"/>
</dbReference>
<dbReference type="NCBIfam" id="TIGR00263">
    <property type="entry name" value="trpB"/>
    <property type="match status" value="1"/>
</dbReference>
<dbReference type="PANTHER" id="PTHR48077:SF3">
    <property type="entry name" value="TRYPTOPHAN SYNTHASE"/>
    <property type="match status" value="1"/>
</dbReference>
<dbReference type="PANTHER" id="PTHR48077">
    <property type="entry name" value="TRYPTOPHAN SYNTHASE-RELATED"/>
    <property type="match status" value="1"/>
</dbReference>
<dbReference type="Pfam" id="PF00291">
    <property type="entry name" value="PALP"/>
    <property type="match status" value="1"/>
</dbReference>
<dbReference type="PIRSF" id="PIRSF001413">
    <property type="entry name" value="Trp_syn_beta"/>
    <property type="match status" value="1"/>
</dbReference>
<dbReference type="SUPFAM" id="SSF53686">
    <property type="entry name" value="Tryptophan synthase beta subunit-like PLP-dependent enzymes"/>
    <property type="match status" value="1"/>
</dbReference>
<dbReference type="PROSITE" id="PS00168">
    <property type="entry name" value="TRP_SYNTHASE_BETA"/>
    <property type="match status" value="1"/>
</dbReference>
<sequence>MSASPIADYHAFPDAQGHFGRYGGSFVAETLVGPLQELAQAYDQARQDPAFQLAYDRDLAHYVGRPSPIYHAQRLSDHVGGAQILLKREDLNHTGAHKINNTIGQALLAARMGKKRIIAETGAGQHGVASATVAARLGLECVVYMGATDIERQKINVYRMKLLGATVVPVTSGSATLKDALNEAMRDWVTNVQDTFYIIGTVAGPDPYPRMVRDFNAIVGREAREQMLAEYGRLPDAITACVGGGSNAIGLFHAFLNDRQVEIVGAEAAGDGINTGRHAASIAAGRPGVLHGNRTYVLCDDDGQIIETHSVSAGLDYPGVGPEHAFLADTGRARYLGITDEEALQAFHLLAHTEGILPALESSHALAQAIKLARERPRDQIVLCNLSGRGDKDVHTIAAREGLVL</sequence>
<organism>
    <name type="scientific">Stenotrophomonas maltophilia (strain K279a)</name>
    <dbReference type="NCBI Taxonomy" id="522373"/>
    <lineage>
        <taxon>Bacteria</taxon>
        <taxon>Pseudomonadati</taxon>
        <taxon>Pseudomonadota</taxon>
        <taxon>Gammaproteobacteria</taxon>
        <taxon>Lysobacterales</taxon>
        <taxon>Lysobacteraceae</taxon>
        <taxon>Stenotrophomonas</taxon>
        <taxon>Stenotrophomonas maltophilia group</taxon>
    </lineage>
</organism>
<comment type="function">
    <text evidence="1">The beta subunit is responsible for the synthesis of L-tryptophan from indole and L-serine.</text>
</comment>
<comment type="catalytic activity">
    <reaction evidence="1">
        <text>(1S,2R)-1-C-(indol-3-yl)glycerol 3-phosphate + L-serine = D-glyceraldehyde 3-phosphate + L-tryptophan + H2O</text>
        <dbReference type="Rhea" id="RHEA:10532"/>
        <dbReference type="ChEBI" id="CHEBI:15377"/>
        <dbReference type="ChEBI" id="CHEBI:33384"/>
        <dbReference type="ChEBI" id="CHEBI:57912"/>
        <dbReference type="ChEBI" id="CHEBI:58866"/>
        <dbReference type="ChEBI" id="CHEBI:59776"/>
        <dbReference type="EC" id="4.2.1.20"/>
    </reaction>
</comment>
<comment type="cofactor">
    <cofactor evidence="1">
        <name>pyridoxal 5'-phosphate</name>
        <dbReference type="ChEBI" id="CHEBI:597326"/>
    </cofactor>
</comment>
<comment type="pathway">
    <text evidence="1">Amino-acid biosynthesis; L-tryptophan biosynthesis; L-tryptophan from chorismate: step 5/5.</text>
</comment>
<comment type="subunit">
    <text evidence="1">Tetramer of two alpha and two beta chains.</text>
</comment>
<comment type="similarity">
    <text evidence="1">Belongs to the TrpB family.</text>
</comment>
<evidence type="ECO:0000255" key="1">
    <source>
        <dbReference type="HAMAP-Rule" id="MF_00133"/>
    </source>
</evidence>
<protein>
    <recommendedName>
        <fullName evidence="1">Tryptophan synthase beta chain</fullName>
        <ecNumber evidence="1">4.2.1.20</ecNumber>
    </recommendedName>
</protein>
<reference key="1">
    <citation type="journal article" date="2008" name="Genome Biol.">
        <title>The complete genome, comparative and functional analysis of Stenotrophomonas maltophilia reveals an organism heavily shielded by drug resistance determinants.</title>
        <authorList>
            <person name="Crossman L.C."/>
            <person name="Gould V.C."/>
            <person name="Dow J.M."/>
            <person name="Vernikos G.S."/>
            <person name="Okazaki A."/>
            <person name="Sebaihia M."/>
            <person name="Saunders D."/>
            <person name="Arrowsmith C."/>
            <person name="Carver T."/>
            <person name="Peters N."/>
            <person name="Adlem E."/>
            <person name="Kerhornou A."/>
            <person name="Lord A."/>
            <person name="Murphy L."/>
            <person name="Seeger K."/>
            <person name="Squares R."/>
            <person name="Rutter S."/>
            <person name="Quail M.A."/>
            <person name="Rajandream M.A."/>
            <person name="Harris D."/>
            <person name="Churcher C."/>
            <person name="Bentley S.D."/>
            <person name="Parkhill J."/>
            <person name="Thomson N.R."/>
            <person name="Avison M.B."/>
        </authorList>
    </citation>
    <scope>NUCLEOTIDE SEQUENCE [LARGE SCALE GENOMIC DNA]</scope>
    <source>
        <strain>K279a</strain>
    </source>
</reference>
<name>TRPB_STRMK</name>
<keyword id="KW-0028">Amino-acid biosynthesis</keyword>
<keyword id="KW-0057">Aromatic amino acid biosynthesis</keyword>
<keyword id="KW-0456">Lyase</keyword>
<keyword id="KW-0663">Pyridoxal phosphate</keyword>
<keyword id="KW-1185">Reference proteome</keyword>
<keyword id="KW-0822">Tryptophan biosynthesis</keyword>
<gene>
    <name evidence="1" type="primary">trpB</name>
    <name type="ordered locus">Smlt3419</name>
</gene>